<sequence length="660" mass="70824">MSEKRKSNKIIGIDLGTTNSCVSVMEGGQPKVIASSEGTRTTPSIVAFKGGETLVGIPAKRQAVTNPEKTLASTKRFIGRKFSEVESEIKTVPYKVAPNSKGDAVFDVEQKLYTPEEIGAQILMKMKETAEAYLGETVTEAVITVPAYFNDSQRASTKDAGRIAGLDVKRIIPEPTAAALAYGIDKEGDKKIAVFDLGGGTFDISILEIGDGVFEVLSTNGDTHLGGDDFDGVIINWMLDEFKKQEGIDLSKDNMALQRLKDAAEKAKIELSGVSSTEINQPFITIDANGPKHLALTLTRAQFEHLASSLIERTKQPCAQALKDAKLSASDIDDVLLVGGMSRMPAVQAVVKEIFGKEPNKGVNPDEVVAIGAAIQGGVLGGEVKDVLLLDVIPLSLGIETLGGVMTPLVERNTTIPTQKKQIFSTAADNQPAVTIVVLQGERPMAKDNKEIGRFDLTDIPPAPRGHPQIEVTFDIDANGILHVSAKDAASGREQKIRIEASSGLKEDEIQQMIRDAELHKEEDKQRKEASDVKNEADGMIFRAEKAVKDYHDKIPAELVKEIEEHIEKVRQAIKEDASTTAIKAASDELSTHMQKIGEAMQAQSASAAASSAANAQGGPNINSEDLKKHSFSTRPPAGGSASSTDNIEDADVEIVDKPE</sequence>
<comment type="function">
    <text evidence="1">Acts as a chaperone.</text>
</comment>
<comment type="induction">
    <text evidence="1">By stress conditions e.g. heat shock (By similarity).</text>
</comment>
<comment type="miscellaneous">
    <text>Expressed early during infection.</text>
</comment>
<comment type="similarity">
    <text evidence="3">Belongs to the heat shock protein 70 family.</text>
</comment>
<feature type="initiator methionine" description="Removed">
    <location>
        <position position="1"/>
    </location>
</feature>
<feature type="chain" id="PRO_0000078446" description="Chaperone protein DnaK">
    <location>
        <begin position="2"/>
        <end position="660"/>
    </location>
</feature>
<feature type="region of interest" description="Disordered" evidence="2">
    <location>
        <begin position="608"/>
        <end position="660"/>
    </location>
</feature>
<feature type="compositionally biased region" description="Low complexity" evidence="2">
    <location>
        <begin position="608"/>
        <end position="617"/>
    </location>
</feature>
<feature type="modified residue" description="Phosphothreonine; by autocatalysis" evidence="1">
    <location>
        <position position="201"/>
    </location>
</feature>
<feature type="sequence variant" description="In strain: L2 and E/UW-5/Cx.">
    <original>H</original>
    <variation>R</variation>
    <location>
        <position position="593"/>
    </location>
</feature>
<feature type="sequence conflict" description="In Ref. 2; AAA03644." evidence="3" ref="2">
    <original>VFDLGGGTFDISILEIGD</original>
    <variation>SLRLRRRNFRYFYLGNRWI</variation>
    <location>
        <begin position="194"/>
        <end position="211"/>
    </location>
</feature>
<feature type="sequence conflict" description="In Ref. 2." evidence="3" ref="2">
    <location>
        <begin position="232"/>
        <end position="240"/>
    </location>
</feature>
<feature type="sequence conflict" description="In Ref. 2; AAA03644." evidence="3" ref="2">
    <original>EIFGKEPNKG</original>
    <variation>RSLVKSLIKA</variation>
    <location>
        <begin position="353"/>
        <end position="362"/>
    </location>
</feature>
<gene>
    <name type="primary">dnaK</name>
    <name type="ordered locus">CT_396</name>
</gene>
<evidence type="ECO:0000250" key="1"/>
<evidence type="ECO:0000256" key="2">
    <source>
        <dbReference type="SAM" id="MobiDB-lite"/>
    </source>
</evidence>
<evidence type="ECO:0000305" key="3"/>
<accession>P17821</accession>
<accession>O84401</accession>
<accession>P16896</accession>
<accession>Q46400</accession>
<organism>
    <name type="scientific">Chlamydia trachomatis serovar D (strain ATCC VR-885 / DSM 19411 / UW-3/Cx)</name>
    <dbReference type="NCBI Taxonomy" id="272561"/>
    <lineage>
        <taxon>Bacteria</taxon>
        <taxon>Pseudomonadati</taxon>
        <taxon>Chlamydiota</taxon>
        <taxon>Chlamydiia</taxon>
        <taxon>Chlamydiales</taxon>
        <taxon>Chlamydiaceae</taxon>
        <taxon>Chlamydia/Chlamydophila group</taxon>
        <taxon>Chlamydia</taxon>
    </lineage>
</organism>
<proteinExistence type="inferred from homology"/>
<dbReference type="EMBL" id="X52175">
    <property type="protein sequence ID" value="CAA36423.1"/>
    <property type="molecule type" value="Genomic_DNA"/>
</dbReference>
<dbReference type="EMBL" id="M27580">
    <property type="protein sequence ID" value="AAA03644.1"/>
    <property type="molecule type" value="Unassigned_DNA"/>
</dbReference>
<dbReference type="EMBL" id="AE001273">
    <property type="protein sequence ID" value="AAC67993.1"/>
    <property type="molecule type" value="Genomic_DNA"/>
</dbReference>
<dbReference type="EMBL" id="L22180">
    <property type="protein sequence ID" value="AAC36839.1"/>
    <property type="molecule type" value="Unassigned_DNA"/>
</dbReference>
<dbReference type="PIR" id="A40158">
    <property type="entry name" value="A40158"/>
</dbReference>
<dbReference type="PIR" id="B71521">
    <property type="entry name" value="B71521"/>
</dbReference>
<dbReference type="RefSeq" id="NP_219906.1">
    <property type="nucleotide sequence ID" value="NC_000117.1"/>
</dbReference>
<dbReference type="RefSeq" id="WP_009871748.1">
    <property type="nucleotide sequence ID" value="NC_000117.1"/>
</dbReference>
<dbReference type="SMR" id="P17821"/>
<dbReference type="FunCoup" id="P17821">
    <property type="interactions" value="257"/>
</dbReference>
<dbReference type="STRING" id="272561.CT_396"/>
<dbReference type="EnsemblBacteria" id="AAC67993">
    <property type="protein sequence ID" value="AAC67993"/>
    <property type="gene ID" value="CT_396"/>
</dbReference>
<dbReference type="GeneID" id="884718"/>
<dbReference type="KEGG" id="ctr:CT_396"/>
<dbReference type="PATRIC" id="fig|272561.5.peg.426"/>
<dbReference type="HOGENOM" id="CLU_005965_2_1_0"/>
<dbReference type="InParanoid" id="P17821"/>
<dbReference type="OrthoDB" id="9766019at2"/>
<dbReference type="Proteomes" id="UP000000431">
    <property type="component" value="Chromosome"/>
</dbReference>
<dbReference type="GO" id="GO:0005524">
    <property type="term" value="F:ATP binding"/>
    <property type="evidence" value="ECO:0007669"/>
    <property type="project" value="UniProtKB-UniRule"/>
</dbReference>
<dbReference type="GO" id="GO:0016887">
    <property type="term" value="F:ATP hydrolysis activity"/>
    <property type="evidence" value="ECO:0000318"/>
    <property type="project" value="GO_Central"/>
</dbReference>
<dbReference type="GO" id="GO:0140662">
    <property type="term" value="F:ATP-dependent protein folding chaperone"/>
    <property type="evidence" value="ECO:0007669"/>
    <property type="project" value="InterPro"/>
</dbReference>
<dbReference type="GO" id="GO:0031072">
    <property type="term" value="F:heat shock protein binding"/>
    <property type="evidence" value="ECO:0000318"/>
    <property type="project" value="GO_Central"/>
</dbReference>
<dbReference type="GO" id="GO:0044183">
    <property type="term" value="F:protein folding chaperone"/>
    <property type="evidence" value="ECO:0000318"/>
    <property type="project" value="GO_Central"/>
</dbReference>
<dbReference type="GO" id="GO:0051082">
    <property type="term" value="F:unfolded protein binding"/>
    <property type="evidence" value="ECO:0007669"/>
    <property type="project" value="InterPro"/>
</dbReference>
<dbReference type="GO" id="GO:0051085">
    <property type="term" value="P:chaperone cofactor-dependent protein refolding"/>
    <property type="evidence" value="ECO:0000318"/>
    <property type="project" value="GO_Central"/>
</dbReference>
<dbReference type="GO" id="GO:0042026">
    <property type="term" value="P:protein refolding"/>
    <property type="evidence" value="ECO:0000318"/>
    <property type="project" value="GO_Central"/>
</dbReference>
<dbReference type="CDD" id="cd10234">
    <property type="entry name" value="ASKHA_NBD_HSP70_DnaK-like"/>
    <property type="match status" value="1"/>
</dbReference>
<dbReference type="FunFam" id="2.60.34.10:FF:000014">
    <property type="entry name" value="Chaperone protein DnaK HSP70"/>
    <property type="match status" value="1"/>
</dbReference>
<dbReference type="FunFam" id="1.20.1270.10:FF:000001">
    <property type="entry name" value="Molecular chaperone DnaK"/>
    <property type="match status" value="1"/>
</dbReference>
<dbReference type="FunFam" id="3.30.420.40:FF:000004">
    <property type="entry name" value="Molecular chaperone DnaK"/>
    <property type="match status" value="1"/>
</dbReference>
<dbReference type="FunFam" id="3.90.640.10:FF:000003">
    <property type="entry name" value="Molecular chaperone DnaK"/>
    <property type="match status" value="1"/>
</dbReference>
<dbReference type="Gene3D" id="1.20.1270.10">
    <property type="match status" value="1"/>
</dbReference>
<dbReference type="Gene3D" id="3.30.420.40">
    <property type="match status" value="2"/>
</dbReference>
<dbReference type="Gene3D" id="3.90.640.10">
    <property type="entry name" value="Actin, Chain A, domain 4"/>
    <property type="match status" value="1"/>
</dbReference>
<dbReference type="Gene3D" id="2.60.34.10">
    <property type="entry name" value="Substrate Binding Domain Of DNAk, Chain A, domain 1"/>
    <property type="match status" value="1"/>
</dbReference>
<dbReference type="HAMAP" id="MF_00332">
    <property type="entry name" value="DnaK"/>
    <property type="match status" value="1"/>
</dbReference>
<dbReference type="InterPro" id="IPR043129">
    <property type="entry name" value="ATPase_NBD"/>
</dbReference>
<dbReference type="InterPro" id="IPR012725">
    <property type="entry name" value="Chaperone_DnaK"/>
</dbReference>
<dbReference type="InterPro" id="IPR018181">
    <property type="entry name" value="Heat_shock_70_CS"/>
</dbReference>
<dbReference type="InterPro" id="IPR029048">
    <property type="entry name" value="HSP70_C_sf"/>
</dbReference>
<dbReference type="InterPro" id="IPR029047">
    <property type="entry name" value="HSP70_peptide-bd_sf"/>
</dbReference>
<dbReference type="InterPro" id="IPR013126">
    <property type="entry name" value="Hsp_70_fam"/>
</dbReference>
<dbReference type="NCBIfam" id="NF001413">
    <property type="entry name" value="PRK00290.1"/>
    <property type="match status" value="1"/>
</dbReference>
<dbReference type="NCBIfam" id="TIGR02350">
    <property type="entry name" value="prok_dnaK"/>
    <property type="match status" value="1"/>
</dbReference>
<dbReference type="PANTHER" id="PTHR19375">
    <property type="entry name" value="HEAT SHOCK PROTEIN 70KDA"/>
    <property type="match status" value="1"/>
</dbReference>
<dbReference type="Pfam" id="PF00012">
    <property type="entry name" value="HSP70"/>
    <property type="match status" value="1"/>
</dbReference>
<dbReference type="PRINTS" id="PR00301">
    <property type="entry name" value="HEATSHOCK70"/>
</dbReference>
<dbReference type="SUPFAM" id="SSF53067">
    <property type="entry name" value="Actin-like ATPase domain"/>
    <property type="match status" value="2"/>
</dbReference>
<dbReference type="SUPFAM" id="SSF100934">
    <property type="entry name" value="Heat shock protein 70kD (HSP70), C-terminal subdomain"/>
    <property type="match status" value="1"/>
</dbReference>
<dbReference type="SUPFAM" id="SSF100920">
    <property type="entry name" value="Heat shock protein 70kD (HSP70), peptide-binding domain"/>
    <property type="match status" value="1"/>
</dbReference>
<dbReference type="PROSITE" id="PS00297">
    <property type="entry name" value="HSP70_1"/>
    <property type="match status" value="1"/>
</dbReference>
<dbReference type="PROSITE" id="PS00329">
    <property type="entry name" value="HSP70_2"/>
    <property type="match status" value="1"/>
</dbReference>
<dbReference type="PROSITE" id="PS01036">
    <property type="entry name" value="HSP70_3"/>
    <property type="match status" value="1"/>
</dbReference>
<reference key="1">
    <citation type="journal article" date="1990" name="Infect. Immun.">
        <title>The 75-kilodalton cytoplasmic Chlamydia trachomatis L2 polypeptide is a DnaK-like protein.</title>
        <authorList>
            <person name="Birkelund S."/>
            <person name="Lundemose A.G."/>
            <person name="Christiansen G."/>
        </authorList>
    </citation>
    <scope>NUCLEOTIDE SEQUENCE [GENOMIC DNA]</scope>
    <source>
        <strain>L2</strain>
    </source>
</reference>
<reference key="2">
    <citation type="journal article" date="1990" name="Infect. Immun.">
        <title>The 75-kilodalton protein of Chlamydia trachomatis: a member of the heat shock protein 70 family?</title>
        <authorList>
            <person name="Danilition S.L."/>
            <person name="Maclean I.W."/>
            <person name="Peeling R."/>
            <person name="Winston S."/>
            <person name="Brunham R.C."/>
        </authorList>
    </citation>
    <scope>NUCLEOTIDE SEQUENCE [GENOMIC DNA]</scope>
    <source>
        <strain>ATCC VR-885 / DSM 19411 / UW-3/Cx</strain>
    </source>
</reference>
<reference key="3">
    <citation type="journal article" date="1998" name="Science">
        <title>Genome sequence of an obligate intracellular pathogen of humans: Chlamydia trachomatis.</title>
        <authorList>
            <person name="Stephens R.S."/>
            <person name="Kalman S."/>
            <person name="Lammel C.J."/>
            <person name="Fan J."/>
            <person name="Marathe R."/>
            <person name="Aravind L."/>
            <person name="Mitchell W.P."/>
            <person name="Olinger L."/>
            <person name="Tatusov R.L."/>
            <person name="Zhao Q."/>
            <person name="Koonin E.V."/>
            <person name="Davis R.W."/>
        </authorList>
    </citation>
    <scope>NUCLEOTIDE SEQUENCE [LARGE SCALE GENOMIC DNA]</scope>
    <source>
        <strain>ATCC VR-885 / DSM 19411 / UW-3/Cx</strain>
    </source>
</reference>
<reference key="4">
    <citation type="journal article" date="1993" name="J. Biol. Chem.">
        <title>Molecular characterization and outer membrane association of a Chlamydia trachomatis protein related to the hsp70 family of proteins.</title>
        <authorList>
            <person name="Raulston J.E."/>
            <person name="Davis C.H."/>
            <person name="Schmiel D.H."/>
            <person name="Morgan M.M."/>
            <person name="Wyrick P.B."/>
        </authorList>
    </citation>
    <scope>NUCLEOTIDE SEQUENCE [GENOMIC DNA] OF 1-626</scope>
    <source>
        <strain>E/UW-5/Cx</strain>
    </source>
</reference>
<name>DNAK_CHLTR</name>
<keyword id="KW-0067">ATP-binding</keyword>
<keyword id="KW-0143">Chaperone</keyword>
<keyword id="KW-0547">Nucleotide-binding</keyword>
<keyword id="KW-0597">Phosphoprotein</keyword>
<keyword id="KW-1185">Reference proteome</keyword>
<keyword id="KW-0346">Stress response</keyword>
<protein>
    <recommendedName>
        <fullName>Chaperone protein DnaK</fullName>
    </recommendedName>
    <alternativeName>
        <fullName>75 kDa membrane protein</fullName>
    </alternativeName>
    <alternativeName>
        <fullName>HSP70</fullName>
    </alternativeName>
    <alternativeName>
        <fullName>Heat shock 70 kDa protein</fullName>
    </alternativeName>
    <alternativeName>
        <fullName>Heat shock protein 70</fullName>
    </alternativeName>
</protein>